<organism>
    <name type="scientific">Sus scrofa</name>
    <name type="common">Pig</name>
    <dbReference type="NCBI Taxonomy" id="9823"/>
    <lineage>
        <taxon>Eukaryota</taxon>
        <taxon>Metazoa</taxon>
        <taxon>Chordata</taxon>
        <taxon>Craniata</taxon>
        <taxon>Vertebrata</taxon>
        <taxon>Euteleostomi</taxon>
        <taxon>Mammalia</taxon>
        <taxon>Eutheria</taxon>
        <taxon>Laurasiatheria</taxon>
        <taxon>Artiodactyla</taxon>
        <taxon>Suina</taxon>
        <taxon>Suidae</taxon>
        <taxon>Sus</taxon>
    </lineage>
</organism>
<accession>Q5S3G4</accession>
<gene>
    <name type="primary">COX5B</name>
</gene>
<comment type="function">
    <text evidence="2">Component of the cytochrome c oxidase, the last enzyme in the mitochondrial electron transport chain which drives oxidative phosphorylation. The respiratory chain contains 3 multisubunit complexes succinate dehydrogenase (complex II, CII), ubiquinol-cytochrome c oxidoreductase (cytochrome b-c1 complex, complex III, CIII) and cytochrome c oxidase (complex IV, CIV), that cooperate to transfer electrons derived from NADH and succinate to molecular oxygen, creating an electrochemical gradient over the inner membrane that drives transmembrane transport and the ATP synthase. Cytochrome c oxidase is the component of the respiratory chain that catalyzes the reduction of oxygen to water. Electrons originating from reduced cytochrome c in the intermembrane space (IMS) are transferred via the dinuclear copper A center (CU(A)) of subunit 2 and heme A of subunit 1 to the active site in subunit 1, a binuclear center (BNC) formed by heme A3 and copper B (CU(B)). The BNC reduces molecular oxygen to 2 water molecules using 4 electrons from cytochrome c in the IMS and 4 protons from the mitochondrial matrix.</text>
</comment>
<comment type="pathway">
    <text evidence="2">Energy metabolism; oxidative phosphorylation.</text>
</comment>
<comment type="subunit">
    <text evidence="1">Component of the cytochrome c oxidase (complex IV, CIV), a multisubunit enzyme composed of 14 subunits. The complex is composed of a catalytic core of 3 subunits MT-CO1, MT-CO2 and MT-CO3, encoded in the mitochondrial DNA, and 11 supernumerary subunits COX4I, COX5A, COX5B, COX6A, COX6B, COX6C, COX7A, COX7B, COX7C, COX8 and NDUFA4, which are encoded in the nuclear genome. The complex exists as a monomer or a dimer and forms supercomplexes (SCs) in the inner mitochondrial membrane with NADH-ubiquinone oxidoreductase (complex I, CI) and ubiquinol-cytochrome c oxidoreductase (cytochrome b-c1 complex, complex III, CIII), resulting in different assemblies (supercomplex SCI(1)III(2)IV(1) and megacomplex MCI(2)III(2)IV(2)).</text>
</comment>
<comment type="subcellular location">
    <subcellularLocation>
        <location evidence="1">Mitochondrion inner membrane</location>
        <topology evidence="1">Peripheral membrane protein</topology>
        <orientation evidence="1">Matrix side</orientation>
    </subcellularLocation>
</comment>
<comment type="similarity">
    <text evidence="5">Belongs to the cytochrome c oxidase subunit 5B family.</text>
</comment>
<reference key="1">
    <citation type="submission" date="2004-10" db="EMBL/GenBank/DDBJ databases">
        <title>Identification of pig Cox5b.</title>
        <authorList>
            <person name="Cui X.S."/>
            <person name="Hwang K.C."/>
            <person name="Kim N.H."/>
        </authorList>
    </citation>
    <scope>NUCLEOTIDE SEQUENCE [MRNA]</scope>
</reference>
<evidence type="ECO:0000250" key="1">
    <source>
        <dbReference type="UniProtKB" id="P00428"/>
    </source>
</evidence>
<evidence type="ECO:0000250" key="2">
    <source>
        <dbReference type="UniProtKB" id="P04037"/>
    </source>
</evidence>
<evidence type="ECO:0000250" key="3">
    <source>
        <dbReference type="UniProtKB" id="P19536"/>
    </source>
</evidence>
<evidence type="ECO:0000255" key="4">
    <source>
        <dbReference type="PROSITE-ProRule" id="PRU00692"/>
    </source>
</evidence>
<evidence type="ECO:0000305" key="5"/>
<keyword id="KW-0002">3D-structure</keyword>
<keyword id="KW-0007">Acetylation</keyword>
<keyword id="KW-0472">Membrane</keyword>
<keyword id="KW-0479">Metal-binding</keyword>
<keyword id="KW-0496">Mitochondrion</keyword>
<keyword id="KW-0999">Mitochondrion inner membrane</keyword>
<keyword id="KW-1185">Reference proteome</keyword>
<keyword id="KW-0809">Transit peptide</keyword>
<keyword id="KW-0862">Zinc</keyword>
<proteinExistence type="evidence at protein level"/>
<name>COX5B_PIG</name>
<dbReference type="EMBL" id="AY786556">
    <property type="protein sequence ID" value="AAV53387.1"/>
    <property type="molecule type" value="mRNA"/>
</dbReference>
<dbReference type="RefSeq" id="NP_001007518.1">
    <property type="nucleotide sequence ID" value="NM_001007517.1"/>
</dbReference>
<dbReference type="PDB" id="8UGH">
    <property type="method" value="EM"/>
    <property type="resolution" value="2.10 A"/>
    <property type="chains" value="4F=1-129"/>
</dbReference>
<dbReference type="PDB" id="8UGI">
    <property type="method" value="EM"/>
    <property type="resolution" value="2.10 A"/>
    <property type="chains" value="4F=1-129"/>
</dbReference>
<dbReference type="PDB" id="8UGJ">
    <property type="method" value="EM"/>
    <property type="resolution" value="2.30 A"/>
    <property type="chains" value="4F/8F=1-128"/>
</dbReference>
<dbReference type="PDB" id="8UGL">
    <property type="method" value="EM"/>
    <property type="resolution" value="3.00 A"/>
    <property type="chains" value="4F=1-129"/>
</dbReference>
<dbReference type="PDB" id="8UGN">
    <property type="method" value="EM"/>
    <property type="resolution" value="2.70 A"/>
    <property type="chains" value="4F/8F=1-128"/>
</dbReference>
<dbReference type="PDB" id="8UGR">
    <property type="method" value="EM"/>
    <property type="resolution" value="6.50 A"/>
    <property type="chains" value="4F/8F=1-129"/>
</dbReference>
<dbReference type="PDBsum" id="8UGH"/>
<dbReference type="PDBsum" id="8UGI"/>
<dbReference type="PDBsum" id="8UGJ"/>
<dbReference type="PDBsum" id="8UGL"/>
<dbReference type="PDBsum" id="8UGN"/>
<dbReference type="PDBsum" id="8UGR"/>
<dbReference type="EMDB" id="EMD-42225"/>
<dbReference type="EMDB" id="EMD-42226"/>
<dbReference type="EMDB" id="EMD-42227"/>
<dbReference type="EMDB" id="EMD-42229"/>
<dbReference type="EMDB" id="EMD-42230"/>
<dbReference type="EMDB" id="EMD-42233"/>
<dbReference type="SMR" id="Q5S3G4"/>
<dbReference type="FunCoup" id="Q5S3G4">
    <property type="interactions" value="1438"/>
</dbReference>
<dbReference type="STRING" id="9823.ENSSSCP00000008748"/>
<dbReference type="iPTMnet" id="Q5S3G4"/>
<dbReference type="PaxDb" id="9823-ENSSSCP00000008748"/>
<dbReference type="PeptideAtlas" id="Q5S3G4"/>
<dbReference type="Ensembl" id="ENSSSCT00000008974.5">
    <property type="protein sequence ID" value="ENSSSCP00000008748.2"/>
    <property type="gene ID" value="ENSSSCG00000008195.5"/>
</dbReference>
<dbReference type="Ensembl" id="ENSSSCT00015102934.1">
    <property type="protein sequence ID" value="ENSSSCP00015042820.1"/>
    <property type="gene ID" value="ENSSSCG00015076314.1"/>
</dbReference>
<dbReference type="Ensembl" id="ENSSSCT00025034868.1">
    <property type="protein sequence ID" value="ENSSSCP00025014524.1"/>
    <property type="gene ID" value="ENSSSCG00025025808.1"/>
</dbReference>
<dbReference type="Ensembl" id="ENSSSCT00030082884.1">
    <property type="protein sequence ID" value="ENSSSCP00030038071.1"/>
    <property type="gene ID" value="ENSSSCG00030059360.1"/>
</dbReference>
<dbReference type="Ensembl" id="ENSSSCT00035074454.1">
    <property type="protein sequence ID" value="ENSSSCP00035030218.1"/>
    <property type="gene ID" value="ENSSSCG00035055797.1"/>
</dbReference>
<dbReference type="Ensembl" id="ENSSSCT00040103184.1">
    <property type="protein sequence ID" value="ENSSSCP00040046704.1"/>
    <property type="gene ID" value="ENSSSCG00040074620.1"/>
</dbReference>
<dbReference type="Ensembl" id="ENSSSCT00045050672.1">
    <property type="protein sequence ID" value="ENSSSCP00045035278.1"/>
    <property type="gene ID" value="ENSSSCG00045029700.1"/>
</dbReference>
<dbReference type="Ensembl" id="ENSSSCT00050100657.1">
    <property type="protein sequence ID" value="ENSSSCP00050043709.1"/>
    <property type="gene ID" value="ENSSSCG00050073602.1"/>
</dbReference>
<dbReference type="Ensembl" id="ENSSSCT00055030709.1">
    <property type="protein sequence ID" value="ENSSSCP00055024447.1"/>
    <property type="gene ID" value="ENSSSCG00055015594.1"/>
</dbReference>
<dbReference type="Ensembl" id="ENSSSCT00060059096.1">
    <property type="protein sequence ID" value="ENSSSCP00060025318.1"/>
    <property type="gene ID" value="ENSSSCG00060043563.1"/>
</dbReference>
<dbReference type="Ensembl" id="ENSSSCT00065054361.1">
    <property type="protein sequence ID" value="ENSSSCP00065023624.1"/>
    <property type="gene ID" value="ENSSSCG00065039777.1"/>
</dbReference>
<dbReference type="Ensembl" id="ENSSSCT00070057450.1">
    <property type="protein sequence ID" value="ENSSSCP00070048841.1"/>
    <property type="gene ID" value="ENSSSCG00070028627.1"/>
</dbReference>
<dbReference type="Ensembl" id="ENSSSCT00085014016">
    <property type="protein sequence ID" value="ENSSSCP00085010159"/>
    <property type="gene ID" value="ENSSSCG00085007355"/>
</dbReference>
<dbReference type="Ensembl" id="ENSSSCT00105062457">
    <property type="protein sequence ID" value="ENSSSCP00105044394"/>
    <property type="gene ID" value="ENSSSCG00105032822"/>
</dbReference>
<dbReference type="Ensembl" id="ENSSSCT00110068849">
    <property type="protein sequence ID" value="ENSSSCP00110048456"/>
    <property type="gene ID" value="ENSSSCG00110036232"/>
</dbReference>
<dbReference type="Ensembl" id="ENSSSCT00115011643">
    <property type="protein sequence ID" value="ENSSSCP00115010996"/>
    <property type="gene ID" value="ENSSSCG00115006716"/>
</dbReference>
<dbReference type="Ensembl" id="ENSSSCT00130025113">
    <property type="protein sequence ID" value="ENSSSCP00130017574"/>
    <property type="gene ID" value="ENSSSCG00130013493"/>
</dbReference>
<dbReference type="GeneID" id="492822"/>
<dbReference type="KEGG" id="ssc:492822"/>
<dbReference type="CTD" id="1329"/>
<dbReference type="eggNOG" id="KOG3352">
    <property type="taxonomic scope" value="Eukaryota"/>
</dbReference>
<dbReference type="GeneTree" id="ENSGT00390000011010"/>
<dbReference type="HOGENOM" id="CLU_127178_0_0_1"/>
<dbReference type="InParanoid" id="Q5S3G4"/>
<dbReference type="OMA" id="ACFCEPD"/>
<dbReference type="OrthoDB" id="10249250at2759"/>
<dbReference type="TreeFam" id="TF105063"/>
<dbReference type="Reactome" id="R-SSC-5628897">
    <property type="pathway name" value="TP53 Regulates Metabolic Genes"/>
</dbReference>
<dbReference type="Reactome" id="R-SSC-611105">
    <property type="pathway name" value="Respiratory electron transport"/>
</dbReference>
<dbReference type="Reactome" id="R-SSC-9707564">
    <property type="pathway name" value="Cytoprotection by HMOX1"/>
</dbReference>
<dbReference type="Reactome" id="R-SSC-9837999">
    <property type="pathway name" value="Mitochondrial protein degradation"/>
</dbReference>
<dbReference type="Reactome" id="R-SSC-9864848">
    <property type="pathway name" value="Complex IV assembly"/>
</dbReference>
<dbReference type="UniPathway" id="UPA00705"/>
<dbReference type="Proteomes" id="UP000008227">
    <property type="component" value="Chromosome 3"/>
</dbReference>
<dbReference type="Proteomes" id="UP000314985">
    <property type="component" value="Chromosome 3"/>
</dbReference>
<dbReference type="Proteomes" id="UP000694570">
    <property type="component" value="Unplaced"/>
</dbReference>
<dbReference type="Proteomes" id="UP000694571">
    <property type="component" value="Unplaced"/>
</dbReference>
<dbReference type="Proteomes" id="UP000694720">
    <property type="component" value="Unplaced"/>
</dbReference>
<dbReference type="Proteomes" id="UP000694722">
    <property type="component" value="Unplaced"/>
</dbReference>
<dbReference type="Proteomes" id="UP000694723">
    <property type="component" value="Unplaced"/>
</dbReference>
<dbReference type="Proteomes" id="UP000694724">
    <property type="component" value="Unplaced"/>
</dbReference>
<dbReference type="Proteomes" id="UP000694725">
    <property type="component" value="Unplaced"/>
</dbReference>
<dbReference type="Proteomes" id="UP000694726">
    <property type="component" value="Unplaced"/>
</dbReference>
<dbReference type="Proteomes" id="UP000694727">
    <property type="component" value="Unplaced"/>
</dbReference>
<dbReference type="Proteomes" id="UP000694728">
    <property type="component" value="Unplaced"/>
</dbReference>
<dbReference type="Bgee" id="ENSSSCG00000008195">
    <property type="expression patterns" value="Expressed in semimembranosus muscle and 44 other cell types or tissues"/>
</dbReference>
<dbReference type="GO" id="GO:0005743">
    <property type="term" value="C:mitochondrial inner membrane"/>
    <property type="evidence" value="ECO:0007669"/>
    <property type="project" value="UniProtKB-SubCell"/>
</dbReference>
<dbReference type="GO" id="GO:0045277">
    <property type="term" value="C:respiratory chain complex IV"/>
    <property type="evidence" value="ECO:0007669"/>
    <property type="project" value="InterPro"/>
</dbReference>
<dbReference type="GO" id="GO:0046872">
    <property type="term" value="F:metal ion binding"/>
    <property type="evidence" value="ECO:0007669"/>
    <property type="project" value="UniProtKB-KW"/>
</dbReference>
<dbReference type="GO" id="GO:0006123">
    <property type="term" value="P:mitochondrial electron transport, cytochrome c to oxygen"/>
    <property type="evidence" value="ECO:0000318"/>
    <property type="project" value="GO_Central"/>
</dbReference>
<dbReference type="CDD" id="cd00924">
    <property type="entry name" value="Cyt_c_Oxidase_Vb"/>
    <property type="match status" value="1"/>
</dbReference>
<dbReference type="FunFam" id="2.60.11.10:FF:000001">
    <property type="entry name" value="Cytochrome c oxidase subunit 5B, mitochondrial"/>
    <property type="match status" value="1"/>
</dbReference>
<dbReference type="Gene3D" id="2.60.11.10">
    <property type="entry name" value="Cytochrome c oxidase, subunit Vb"/>
    <property type="match status" value="1"/>
</dbReference>
<dbReference type="InterPro" id="IPR002124">
    <property type="entry name" value="Cyt_c_oxidase_su5b"/>
</dbReference>
<dbReference type="InterPro" id="IPR036972">
    <property type="entry name" value="Cyt_c_oxidase_su5b_sf"/>
</dbReference>
<dbReference type="PANTHER" id="PTHR10122">
    <property type="entry name" value="CYTOCHROME C OXIDASE SUBUNIT 5B, MITOCHONDRIAL"/>
    <property type="match status" value="1"/>
</dbReference>
<dbReference type="PANTHER" id="PTHR10122:SF20">
    <property type="entry name" value="CYTOCHROME C OXIDASE SUBUNIT 5B, MITOCHONDRIAL"/>
    <property type="match status" value="1"/>
</dbReference>
<dbReference type="Pfam" id="PF01215">
    <property type="entry name" value="COX5B"/>
    <property type="match status" value="1"/>
</dbReference>
<dbReference type="SUPFAM" id="SSF57802">
    <property type="entry name" value="Rubredoxin-like"/>
    <property type="match status" value="1"/>
</dbReference>
<dbReference type="PROSITE" id="PS00848">
    <property type="entry name" value="COX5B_1"/>
    <property type="match status" value="1"/>
</dbReference>
<dbReference type="PROSITE" id="PS51359">
    <property type="entry name" value="COX5B_2"/>
    <property type="match status" value="1"/>
</dbReference>
<protein>
    <recommendedName>
        <fullName>Cytochrome c oxidase subunit 5B, mitochondrial</fullName>
    </recommendedName>
    <alternativeName>
        <fullName>Cytochrome c oxidase polypeptide Vb</fullName>
    </alternativeName>
</protein>
<sequence>MASRLLRGAGALAAQTLRARGPNGVAVVRSMASGGGVPTDEEQATGLEREVMMAARKGLDPYNILAPKAASGTKEDPNLVPSITNKRIVGCICEEDNSTVIWFWVHKGETQRCPSCGTHYKLVSHQLAH</sequence>
<feature type="transit peptide" description="Mitochondrion" evidence="1">
    <location>
        <begin position="1"/>
        <end position="31"/>
    </location>
</feature>
<feature type="chain" id="PRO_0000253610" description="Cytochrome c oxidase subunit 5B, mitochondrial">
    <location>
        <begin position="32"/>
        <end position="129"/>
    </location>
</feature>
<feature type="binding site" evidence="4">
    <location>
        <position position="91"/>
    </location>
    <ligand>
        <name>Zn(2+)</name>
        <dbReference type="ChEBI" id="CHEBI:29105"/>
    </ligand>
</feature>
<feature type="binding site" evidence="4">
    <location>
        <position position="93"/>
    </location>
    <ligand>
        <name>Zn(2+)</name>
        <dbReference type="ChEBI" id="CHEBI:29105"/>
    </ligand>
</feature>
<feature type="binding site" evidence="4">
    <location>
        <position position="113"/>
    </location>
    <ligand>
        <name>Zn(2+)</name>
        <dbReference type="ChEBI" id="CHEBI:29105"/>
    </ligand>
</feature>
<feature type="binding site" evidence="4">
    <location>
        <position position="116"/>
    </location>
    <ligand>
        <name>Zn(2+)</name>
        <dbReference type="ChEBI" id="CHEBI:29105"/>
    </ligand>
</feature>
<feature type="modified residue" description="N6-acetyllysine" evidence="3">
    <location>
        <position position="68"/>
    </location>
</feature>
<feature type="modified residue" description="N6-acetyllysine" evidence="3">
    <location>
        <position position="86"/>
    </location>
</feature>
<feature type="modified residue" description="N6-acetyllysine" evidence="3">
    <location>
        <position position="121"/>
    </location>
</feature>